<evidence type="ECO:0000255" key="1"/>
<evidence type="ECO:0000305" key="2"/>
<feature type="chain" id="PRO_0000072582" description="Transmembrane protein 60">
    <location>
        <begin position="1"/>
        <end position="133"/>
    </location>
</feature>
<feature type="transmembrane region" description="Helical" evidence="1">
    <location>
        <begin position="5"/>
        <end position="25"/>
    </location>
</feature>
<feature type="transmembrane region" description="Helical" evidence="1">
    <location>
        <begin position="35"/>
        <end position="55"/>
    </location>
</feature>
<feature type="transmembrane region" description="Helical" evidence="1">
    <location>
        <begin position="78"/>
        <end position="98"/>
    </location>
</feature>
<feature type="transmembrane region" description="Helical" evidence="1">
    <location>
        <begin position="110"/>
        <end position="130"/>
    </location>
</feature>
<organism>
    <name type="scientific">Mus musculus</name>
    <name type="common">Mouse</name>
    <dbReference type="NCBI Taxonomy" id="10090"/>
    <lineage>
        <taxon>Eukaryota</taxon>
        <taxon>Metazoa</taxon>
        <taxon>Chordata</taxon>
        <taxon>Craniata</taxon>
        <taxon>Vertebrata</taxon>
        <taxon>Euteleostomi</taxon>
        <taxon>Mammalia</taxon>
        <taxon>Eutheria</taxon>
        <taxon>Euarchontoglires</taxon>
        <taxon>Glires</taxon>
        <taxon>Rodentia</taxon>
        <taxon>Myomorpha</taxon>
        <taxon>Muroidea</taxon>
        <taxon>Muridae</taxon>
        <taxon>Murinae</taxon>
        <taxon>Mus</taxon>
        <taxon>Mus</taxon>
    </lineage>
</organism>
<protein>
    <recommendedName>
        <fullName>Transmembrane protein 60</fullName>
    </recommendedName>
</protein>
<sequence>MRMSLAQRVLLTWLFTLLFLIMLVLKLDEKAPWNWFLIFIPVWIFDTILLVMLIVKMAGRCKSGFDPRHGSHNIKKKAWYLIAMLLKLAFCLALCAKLEQFTTMNLSYVFIPLWALLAGALTELGYNVFFVRD</sequence>
<dbReference type="EMBL" id="BC027828">
    <property type="protein sequence ID" value="AAH27828.1"/>
    <property type="molecule type" value="mRNA"/>
</dbReference>
<dbReference type="EMBL" id="AK041036">
    <property type="protein sequence ID" value="BAC30791.1"/>
    <property type="molecule type" value="mRNA"/>
</dbReference>
<dbReference type="CCDS" id="CCDS19101.1"/>
<dbReference type="RefSeq" id="NP_808269.1">
    <property type="nucleotide sequence ID" value="NM_177601.3"/>
</dbReference>
<dbReference type="FunCoup" id="Q8K174">
    <property type="interactions" value="79"/>
</dbReference>
<dbReference type="STRING" id="10090.ENSMUSP00000110914"/>
<dbReference type="PaxDb" id="10090-ENSMUSP00000110914"/>
<dbReference type="Antibodypedia" id="71000">
    <property type="antibodies" value="4 antibodies from 4 providers"/>
</dbReference>
<dbReference type="Ensembl" id="ENSMUST00000115259.3">
    <property type="protein sequence ID" value="ENSMUSP00000110914.3"/>
    <property type="gene ID" value="ENSMUSG00000045435.10"/>
</dbReference>
<dbReference type="GeneID" id="212090"/>
<dbReference type="KEGG" id="mmu:212090"/>
<dbReference type="UCSC" id="uc008woc.1">
    <property type="organism name" value="mouse"/>
</dbReference>
<dbReference type="AGR" id="MGI:2673965"/>
<dbReference type="CTD" id="85025"/>
<dbReference type="MGI" id="MGI:2673965">
    <property type="gene designation" value="Tmem60"/>
</dbReference>
<dbReference type="VEuPathDB" id="HostDB:ENSMUSG00000045435"/>
<dbReference type="eggNOG" id="KOG3879">
    <property type="taxonomic scope" value="Eukaryota"/>
</dbReference>
<dbReference type="GeneTree" id="ENSGT00390000007283"/>
<dbReference type="HOGENOM" id="CLU_152149_0_0_1"/>
<dbReference type="InParanoid" id="Q8K174"/>
<dbReference type="OMA" id="RTHWNWF"/>
<dbReference type="OrthoDB" id="10258440at2759"/>
<dbReference type="PhylomeDB" id="Q8K174"/>
<dbReference type="TreeFam" id="TF325897"/>
<dbReference type="BioGRID-ORCS" id="212090">
    <property type="hits" value="4 hits in 78 CRISPR screens"/>
</dbReference>
<dbReference type="PRO" id="PR:Q8K174"/>
<dbReference type="Proteomes" id="UP000000589">
    <property type="component" value="Chromosome 5"/>
</dbReference>
<dbReference type="RNAct" id="Q8K174">
    <property type="molecule type" value="protein"/>
</dbReference>
<dbReference type="Bgee" id="ENSMUSG00000045435">
    <property type="expression patterns" value="Expressed in animal zygote and 242 other cell types or tissues"/>
</dbReference>
<dbReference type="GO" id="GO:0016020">
    <property type="term" value="C:membrane"/>
    <property type="evidence" value="ECO:0007669"/>
    <property type="project" value="UniProtKB-SubCell"/>
</dbReference>
<dbReference type="InterPro" id="IPR019396">
    <property type="entry name" value="TM_Fragile-X-F-assoc"/>
</dbReference>
<dbReference type="PANTHER" id="PTHR13568">
    <property type="entry name" value="FAM11A, B PROTEIN"/>
    <property type="match status" value="1"/>
</dbReference>
<dbReference type="PANTHER" id="PTHR13568:SF4">
    <property type="entry name" value="TRANSMEMBRANE PROTEIN 60"/>
    <property type="match status" value="1"/>
</dbReference>
<dbReference type="Pfam" id="PF10269">
    <property type="entry name" value="Tmemb_185A"/>
    <property type="match status" value="1"/>
</dbReference>
<reference key="1">
    <citation type="journal article" date="2004" name="Genome Res.">
        <title>The status, quality, and expansion of the NIH full-length cDNA project: the Mammalian Gene Collection (MGC).</title>
        <authorList>
            <consortium name="The MGC Project Team"/>
        </authorList>
    </citation>
    <scope>NUCLEOTIDE SEQUENCE [LARGE SCALE MRNA]</scope>
    <source>
        <tissue>Mammary tumor</tissue>
    </source>
</reference>
<reference key="2">
    <citation type="journal article" date="2005" name="Science">
        <title>The transcriptional landscape of the mammalian genome.</title>
        <authorList>
            <person name="Carninci P."/>
            <person name="Kasukawa T."/>
            <person name="Katayama S."/>
            <person name="Gough J."/>
            <person name="Frith M.C."/>
            <person name="Maeda N."/>
            <person name="Oyama R."/>
            <person name="Ravasi T."/>
            <person name="Lenhard B."/>
            <person name="Wells C."/>
            <person name="Kodzius R."/>
            <person name="Shimokawa K."/>
            <person name="Bajic V.B."/>
            <person name="Brenner S.E."/>
            <person name="Batalov S."/>
            <person name="Forrest A.R."/>
            <person name="Zavolan M."/>
            <person name="Davis M.J."/>
            <person name="Wilming L.G."/>
            <person name="Aidinis V."/>
            <person name="Allen J.E."/>
            <person name="Ambesi-Impiombato A."/>
            <person name="Apweiler R."/>
            <person name="Aturaliya R.N."/>
            <person name="Bailey T.L."/>
            <person name="Bansal M."/>
            <person name="Baxter L."/>
            <person name="Beisel K.W."/>
            <person name="Bersano T."/>
            <person name="Bono H."/>
            <person name="Chalk A.M."/>
            <person name="Chiu K.P."/>
            <person name="Choudhary V."/>
            <person name="Christoffels A."/>
            <person name="Clutterbuck D.R."/>
            <person name="Crowe M.L."/>
            <person name="Dalla E."/>
            <person name="Dalrymple B.P."/>
            <person name="de Bono B."/>
            <person name="Della Gatta G."/>
            <person name="di Bernardo D."/>
            <person name="Down T."/>
            <person name="Engstrom P."/>
            <person name="Fagiolini M."/>
            <person name="Faulkner G."/>
            <person name="Fletcher C.F."/>
            <person name="Fukushima T."/>
            <person name="Furuno M."/>
            <person name="Futaki S."/>
            <person name="Gariboldi M."/>
            <person name="Georgii-Hemming P."/>
            <person name="Gingeras T.R."/>
            <person name="Gojobori T."/>
            <person name="Green R.E."/>
            <person name="Gustincich S."/>
            <person name="Harbers M."/>
            <person name="Hayashi Y."/>
            <person name="Hensch T.K."/>
            <person name="Hirokawa N."/>
            <person name="Hill D."/>
            <person name="Huminiecki L."/>
            <person name="Iacono M."/>
            <person name="Ikeo K."/>
            <person name="Iwama A."/>
            <person name="Ishikawa T."/>
            <person name="Jakt M."/>
            <person name="Kanapin A."/>
            <person name="Katoh M."/>
            <person name="Kawasawa Y."/>
            <person name="Kelso J."/>
            <person name="Kitamura H."/>
            <person name="Kitano H."/>
            <person name="Kollias G."/>
            <person name="Krishnan S.P."/>
            <person name="Kruger A."/>
            <person name="Kummerfeld S.K."/>
            <person name="Kurochkin I.V."/>
            <person name="Lareau L.F."/>
            <person name="Lazarevic D."/>
            <person name="Lipovich L."/>
            <person name="Liu J."/>
            <person name="Liuni S."/>
            <person name="McWilliam S."/>
            <person name="Madan Babu M."/>
            <person name="Madera M."/>
            <person name="Marchionni L."/>
            <person name="Matsuda H."/>
            <person name="Matsuzawa S."/>
            <person name="Miki H."/>
            <person name="Mignone F."/>
            <person name="Miyake S."/>
            <person name="Morris K."/>
            <person name="Mottagui-Tabar S."/>
            <person name="Mulder N."/>
            <person name="Nakano N."/>
            <person name="Nakauchi H."/>
            <person name="Ng P."/>
            <person name="Nilsson R."/>
            <person name="Nishiguchi S."/>
            <person name="Nishikawa S."/>
            <person name="Nori F."/>
            <person name="Ohara O."/>
            <person name="Okazaki Y."/>
            <person name="Orlando V."/>
            <person name="Pang K.C."/>
            <person name="Pavan W.J."/>
            <person name="Pavesi G."/>
            <person name="Pesole G."/>
            <person name="Petrovsky N."/>
            <person name="Piazza S."/>
            <person name="Reed J."/>
            <person name="Reid J.F."/>
            <person name="Ring B.Z."/>
            <person name="Ringwald M."/>
            <person name="Rost B."/>
            <person name="Ruan Y."/>
            <person name="Salzberg S.L."/>
            <person name="Sandelin A."/>
            <person name="Schneider C."/>
            <person name="Schoenbach C."/>
            <person name="Sekiguchi K."/>
            <person name="Semple C.A."/>
            <person name="Seno S."/>
            <person name="Sessa L."/>
            <person name="Sheng Y."/>
            <person name="Shibata Y."/>
            <person name="Shimada H."/>
            <person name="Shimada K."/>
            <person name="Silva D."/>
            <person name="Sinclair B."/>
            <person name="Sperling S."/>
            <person name="Stupka E."/>
            <person name="Sugiura K."/>
            <person name="Sultana R."/>
            <person name="Takenaka Y."/>
            <person name="Taki K."/>
            <person name="Tammoja K."/>
            <person name="Tan S.L."/>
            <person name="Tang S."/>
            <person name="Taylor M.S."/>
            <person name="Tegner J."/>
            <person name="Teichmann S.A."/>
            <person name="Ueda H.R."/>
            <person name="van Nimwegen E."/>
            <person name="Verardo R."/>
            <person name="Wei C.L."/>
            <person name="Yagi K."/>
            <person name="Yamanishi H."/>
            <person name="Zabarovsky E."/>
            <person name="Zhu S."/>
            <person name="Zimmer A."/>
            <person name="Hide W."/>
            <person name="Bult C."/>
            <person name="Grimmond S.M."/>
            <person name="Teasdale R.D."/>
            <person name="Liu E.T."/>
            <person name="Brusic V."/>
            <person name="Quackenbush J."/>
            <person name="Wahlestedt C."/>
            <person name="Mattick J.S."/>
            <person name="Hume D.A."/>
            <person name="Kai C."/>
            <person name="Sasaki D."/>
            <person name="Tomaru Y."/>
            <person name="Fukuda S."/>
            <person name="Kanamori-Katayama M."/>
            <person name="Suzuki M."/>
            <person name="Aoki J."/>
            <person name="Arakawa T."/>
            <person name="Iida J."/>
            <person name="Imamura K."/>
            <person name="Itoh M."/>
            <person name="Kato T."/>
            <person name="Kawaji H."/>
            <person name="Kawagashira N."/>
            <person name="Kawashima T."/>
            <person name="Kojima M."/>
            <person name="Kondo S."/>
            <person name="Konno H."/>
            <person name="Nakano K."/>
            <person name="Ninomiya N."/>
            <person name="Nishio T."/>
            <person name="Okada M."/>
            <person name="Plessy C."/>
            <person name="Shibata K."/>
            <person name="Shiraki T."/>
            <person name="Suzuki S."/>
            <person name="Tagami M."/>
            <person name="Waki K."/>
            <person name="Watahiki A."/>
            <person name="Okamura-Oho Y."/>
            <person name="Suzuki H."/>
            <person name="Kawai J."/>
            <person name="Hayashizaki Y."/>
        </authorList>
    </citation>
    <scope>NUCLEOTIDE SEQUENCE [LARGE SCALE MRNA] OF 1-74</scope>
    <source>
        <strain>C57BL/6J</strain>
        <tissue>Aorta</tissue>
        <tissue>Vein</tissue>
    </source>
</reference>
<gene>
    <name type="primary">Tmem60</name>
</gene>
<name>TMM60_MOUSE</name>
<accession>Q8K174</accession>
<accession>Q8BRZ0</accession>
<proteinExistence type="evidence at transcript level"/>
<keyword id="KW-0472">Membrane</keyword>
<keyword id="KW-1185">Reference proteome</keyword>
<keyword id="KW-0812">Transmembrane</keyword>
<keyword id="KW-1133">Transmembrane helix</keyword>
<comment type="subcellular location">
    <subcellularLocation>
        <location evidence="2">Membrane</location>
        <topology evidence="2">Multi-pass membrane protein</topology>
    </subcellularLocation>
</comment>